<name>HECD3_MOUSE</name>
<dbReference type="EC" id="2.3.2.26"/>
<dbReference type="EMBL" id="AK051385">
    <property type="protein sequence ID" value="BAC34620.1"/>
    <property type="molecule type" value="mRNA"/>
</dbReference>
<dbReference type="EMBL" id="AK139305">
    <property type="protein sequence ID" value="BAE23948.1"/>
    <property type="molecule type" value="mRNA"/>
</dbReference>
<dbReference type="EMBL" id="AK154378">
    <property type="protein sequence ID" value="BAE32546.1"/>
    <property type="molecule type" value="mRNA"/>
</dbReference>
<dbReference type="EMBL" id="AK155290">
    <property type="protein sequence ID" value="BAE33170.1"/>
    <property type="molecule type" value="mRNA"/>
</dbReference>
<dbReference type="EMBL" id="AK155676">
    <property type="protein sequence ID" value="BAE33384.1"/>
    <property type="molecule type" value="mRNA"/>
</dbReference>
<dbReference type="EMBL" id="AK163323">
    <property type="protein sequence ID" value="BAE37300.1"/>
    <property type="molecule type" value="mRNA"/>
</dbReference>
<dbReference type="EMBL" id="AK165482">
    <property type="protein sequence ID" value="BAE38213.1"/>
    <property type="molecule type" value="mRNA"/>
</dbReference>
<dbReference type="EMBL" id="AK170930">
    <property type="protein sequence ID" value="BAE42122.1"/>
    <property type="molecule type" value="mRNA"/>
</dbReference>
<dbReference type="EMBL" id="AL671671">
    <property type="status" value="NOT_ANNOTATED_CDS"/>
    <property type="molecule type" value="Genomic_DNA"/>
</dbReference>
<dbReference type="EMBL" id="BC024415">
    <property type="protein sequence ID" value="AAH24415.1"/>
    <property type="molecule type" value="mRNA"/>
</dbReference>
<dbReference type="EMBL" id="BC070411">
    <property type="protein sequence ID" value="AAH70411.1"/>
    <property type="molecule type" value="mRNA"/>
</dbReference>
<dbReference type="EMBL" id="BC082276">
    <property type="protein sequence ID" value="AAH82276.1"/>
    <property type="molecule type" value="mRNA"/>
</dbReference>
<dbReference type="CCDS" id="CCDS18522.1">
    <molecule id="Q3U487-1"/>
</dbReference>
<dbReference type="RefSeq" id="NP_780453.1">
    <molecule id="Q3U487-1"/>
    <property type="nucleotide sequence ID" value="NM_175244.4"/>
</dbReference>
<dbReference type="SMR" id="Q3U487"/>
<dbReference type="BioGRID" id="218202">
    <property type="interactions" value="3"/>
</dbReference>
<dbReference type="FunCoup" id="Q3U487">
    <property type="interactions" value="911"/>
</dbReference>
<dbReference type="STRING" id="10090.ENSMUSP00000051922"/>
<dbReference type="iPTMnet" id="Q3U487"/>
<dbReference type="PhosphoSitePlus" id="Q3U487"/>
<dbReference type="SwissPalm" id="Q3U487"/>
<dbReference type="PaxDb" id="10090-ENSMUSP00000051922"/>
<dbReference type="PeptideAtlas" id="Q3U487"/>
<dbReference type="ProteomicsDB" id="269556">
    <molecule id="Q3U487-1"/>
</dbReference>
<dbReference type="ProteomicsDB" id="269557">
    <molecule id="Q3U487-2"/>
</dbReference>
<dbReference type="Pumba" id="Q3U487"/>
<dbReference type="Antibodypedia" id="32577">
    <property type="antibodies" value="112 antibodies from 24 providers"/>
</dbReference>
<dbReference type="DNASU" id="76608"/>
<dbReference type="Ensembl" id="ENSMUST00000050067.10">
    <molecule id="Q3U487-1"/>
    <property type="protein sequence ID" value="ENSMUSP00000051922.10"/>
    <property type="gene ID" value="ENSMUSG00000046861.10"/>
</dbReference>
<dbReference type="GeneID" id="76608"/>
<dbReference type="KEGG" id="mmu:76608"/>
<dbReference type="UCSC" id="uc008uht.1">
    <molecule id="Q3U487-1"/>
    <property type="organism name" value="mouse"/>
</dbReference>
<dbReference type="AGR" id="MGI:1923858"/>
<dbReference type="CTD" id="79654"/>
<dbReference type="MGI" id="MGI:1923858">
    <property type="gene designation" value="Hectd3"/>
</dbReference>
<dbReference type="VEuPathDB" id="HostDB:ENSMUSG00000046861"/>
<dbReference type="eggNOG" id="KOG0939">
    <property type="taxonomic scope" value="Eukaryota"/>
</dbReference>
<dbReference type="GeneTree" id="ENSGT00940000159923"/>
<dbReference type="HOGENOM" id="CLU_002173_11_0_1"/>
<dbReference type="InParanoid" id="Q3U487"/>
<dbReference type="OMA" id="LMCKHAD"/>
<dbReference type="OrthoDB" id="8068875at2759"/>
<dbReference type="PhylomeDB" id="Q3U487"/>
<dbReference type="Reactome" id="R-MMU-983168">
    <property type="pathway name" value="Antigen processing: Ubiquitination &amp; Proteasome degradation"/>
</dbReference>
<dbReference type="UniPathway" id="UPA00143"/>
<dbReference type="BioGRID-ORCS" id="76608">
    <property type="hits" value="1 hit in 78 CRISPR screens"/>
</dbReference>
<dbReference type="ChiTaRS" id="Hectd3">
    <property type="organism name" value="mouse"/>
</dbReference>
<dbReference type="PRO" id="PR:Q3U487"/>
<dbReference type="Proteomes" id="UP000000589">
    <property type="component" value="Chromosome 4"/>
</dbReference>
<dbReference type="RNAct" id="Q3U487">
    <property type="molecule type" value="protein"/>
</dbReference>
<dbReference type="Bgee" id="ENSMUSG00000046861">
    <property type="expression patterns" value="Expressed in small intestine Peyer's patch and 176 other cell types or tissues"/>
</dbReference>
<dbReference type="GO" id="GO:0048471">
    <property type="term" value="C:perinuclear region of cytoplasm"/>
    <property type="evidence" value="ECO:0000314"/>
    <property type="project" value="UniProtKB"/>
</dbReference>
<dbReference type="GO" id="GO:0019905">
    <property type="term" value="F:syntaxin binding"/>
    <property type="evidence" value="ECO:0000353"/>
    <property type="project" value="UniProtKB"/>
</dbReference>
<dbReference type="GO" id="GO:0004842">
    <property type="term" value="F:ubiquitin-protein transferase activity"/>
    <property type="evidence" value="ECO:0000314"/>
    <property type="project" value="UniProtKB"/>
</dbReference>
<dbReference type="GO" id="GO:0043161">
    <property type="term" value="P:proteasome-mediated ubiquitin-dependent protein catabolic process"/>
    <property type="evidence" value="ECO:0000250"/>
    <property type="project" value="UniProtKB"/>
</dbReference>
<dbReference type="GO" id="GO:0016567">
    <property type="term" value="P:protein ubiquitination"/>
    <property type="evidence" value="ECO:0007669"/>
    <property type="project" value="UniProtKB-UniPathway"/>
</dbReference>
<dbReference type="CDD" id="cd08666">
    <property type="entry name" value="APC10-HECTD3"/>
    <property type="match status" value="1"/>
</dbReference>
<dbReference type="FunFam" id="2.60.120.260:FF:000067">
    <property type="entry name" value="Putative E3 ubiquitin-protein ligase HECTD3"/>
    <property type="match status" value="1"/>
</dbReference>
<dbReference type="FunFam" id="3.30.2410.10:FF:000018">
    <property type="entry name" value="Putative E3 ubiquitin-protein ligase HECTD3"/>
    <property type="match status" value="1"/>
</dbReference>
<dbReference type="FunFam" id="3.90.1750.10:FF:000025">
    <property type="entry name" value="Putative E3 ubiquitin-protein ligase HECTD3"/>
    <property type="match status" value="1"/>
</dbReference>
<dbReference type="Gene3D" id="2.60.120.260">
    <property type="entry name" value="Galactose-binding domain-like"/>
    <property type="match status" value="1"/>
</dbReference>
<dbReference type="Gene3D" id="3.30.2160.10">
    <property type="entry name" value="Hect, E3 ligase catalytic domain"/>
    <property type="match status" value="1"/>
</dbReference>
<dbReference type="Gene3D" id="3.30.2410.10">
    <property type="entry name" value="Hect, E3 ligase catalytic domain"/>
    <property type="match status" value="1"/>
</dbReference>
<dbReference type="Gene3D" id="3.90.1750.10">
    <property type="entry name" value="Hect, E3 ligase catalytic domains"/>
    <property type="match status" value="1"/>
</dbReference>
<dbReference type="InterPro" id="IPR004939">
    <property type="entry name" value="APC_su10/DOC_dom"/>
</dbReference>
<dbReference type="InterPro" id="IPR008979">
    <property type="entry name" value="Galactose-bd-like_sf"/>
</dbReference>
<dbReference type="InterPro" id="IPR000569">
    <property type="entry name" value="HECT_dom"/>
</dbReference>
<dbReference type="InterPro" id="IPR035983">
    <property type="entry name" value="Hect_E3_ubiquitin_ligase"/>
</dbReference>
<dbReference type="InterPro" id="IPR042469">
    <property type="entry name" value="HECTD3"/>
</dbReference>
<dbReference type="PANTHER" id="PTHR46654">
    <property type="entry name" value="E3 UBIQUITIN-PROTEIN LIGASE HECTD3"/>
    <property type="match status" value="1"/>
</dbReference>
<dbReference type="PANTHER" id="PTHR46654:SF1">
    <property type="entry name" value="E3 UBIQUITIN-PROTEIN LIGASE HECTD3"/>
    <property type="match status" value="1"/>
</dbReference>
<dbReference type="Pfam" id="PF03256">
    <property type="entry name" value="ANAPC10"/>
    <property type="match status" value="1"/>
</dbReference>
<dbReference type="Pfam" id="PF00632">
    <property type="entry name" value="HECT"/>
    <property type="match status" value="1"/>
</dbReference>
<dbReference type="SMART" id="SM01337">
    <property type="entry name" value="APC10"/>
    <property type="match status" value="1"/>
</dbReference>
<dbReference type="SMART" id="SM00119">
    <property type="entry name" value="HECTc"/>
    <property type="match status" value="1"/>
</dbReference>
<dbReference type="SUPFAM" id="SSF49785">
    <property type="entry name" value="Galactose-binding domain-like"/>
    <property type="match status" value="1"/>
</dbReference>
<dbReference type="SUPFAM" id="SSF56204">
    <property type="entry name" value="Hect, E3 ligase catalytic domain"/>
    <property type="match status" value="1"/>
</dbReference>
<dbReference type="PROSITE" id="PS51284">
    <property type="entry name" value="DOC"/>
    <property type="match status" value="1"/>
</dbReference>
<dbReference type="PROSITE" id="PS50237">
    <property type="entry name" value="HECT"/>
    <property type="match status" value="1"/>
</dbReference>
<feature type="initiator methionine" description="Removed" evidence="1">
    <location>
        <position position="1"/>
    </location>
</feature>
<feature type="chain" id="PRO_0000241446" description="E3 ubiquitin-protein ligase HECTD3">
    <location>
        <begin position="2"/>
        <end position="861"/>
    </location>
</feature>
<feature type="domain" description="DOC" evidence="3">
    <location>
        <begin position="219"/>
        <end position="397"/>
    </location>
</feature>
<feature type="domain" description="HECT" evidence="2">
    <location>
        <begin position="512"/>
        <end position="857"/>
    </location>
</feature>
<feature type="active site" description="Glycyl thioester intermediate" evidence="2">
    <location>
        <position position="823"/>
    </location>
</feature>
<feature type="modified residue" description="N-acetylalanine" evidence="1">
    <location>
        <position position="2"/>
    </location>
</feature>
<feature type="modified residue" description="Phosphoserine" evidence="1">
    <location>
        <position position="12"/>
    </location>
</feature>
<feature type="splice variant" id="VSP_019441" description="In isoform 2." evidence="5">
    <location>
        <begin position="1"/>
        <end position="651"/>
    </location>
</feature>
<feature type="sequence conflict" description="In Ref. 1; BAE32546." evidence="6" ref="1">
    <original>A</original>
    <variation>V</variation>
    <location>
        <position position="549"/>
    </location>
</feature>
<feature type="sequence conflict" description="In Ref. 1; BAE38213." evidence="6" ref="1">
    <original>D</original>
    <variation>G</variation>
    <location>
        <position position="732"/>
    </location>
</feature>
<organism>
    <name type="scientific">Mus musculus</name>
    <name type="common">Mouse</name>
    <dbReference type="NCBI Taxonomy" id="10090"/>
    <lineage>
        <taxon>Eukaryota</taxon>
        <taxon>Metazoa</taxon>
        <taxon>Chordata</taxon>
        <taxon>Craniata</taxon>
        <taxon>Vertebrata</taxon>
        <taxon>Euteleostomi</taxon>
        <taxon>Mammalia</taxon>
        <taxon>Eutheria</taxon>
        <taxon>Euarchontoglires</taxon>
        <taxon>Glires</taxon>
        <taxon>Rodentia</taxon>
        <taxon>Myomorpha</taxon>
        <taxon>Muroidea</taxon>
        <taxon>Muridae</taxon>
        <taxon>Murinae</taxon>
        <taxon>Mus</taxon>
        <taxon>Mus</taxon>
    </lineage>
</organism>
<keyword id="KW-0007">Acetylation</keyword>
<keyword id="KW-0025">Alternative splicing</keyword>
<keyword id="KW-0963">Cytoplasm</keyword>
<keyword id="KW-0597">Phosphoprotein</keyword>
<keyword id="KW-1185">Reference proteome</keyword>
<keyword id="KW-0808">Transferase</keyword>
<keyword id="KW-0833">Ubl conjugation pathway</keyword>
<reference key="1">
    <citation type="journal article" date="2005" name="Science">
        <title>The transcriptional landscape of the mammalian genome.</title>
        <authorList>
            <person name="Carninci P."/>
            <person name="Kasukawa T."/>
            <person name="Katayama S."/>
            <person name="Gough J."/>
            <person name="Frith M.C."/>
            <person name="Maeda N."/>
            <person name="Oyama R."/>
            <person name="Ravasi T."/>
            <person name="Lenhard B."/>
            <person name="Wells C."/>
            <person name="Kodzius R."/>
            <person name="Shimokawa K."/>
            <person name="Bajic V.B."/>
            <person name="Brenner S.E."/>
            <person name="Batalov S."/>
            <person name="Forrest A.R."/>
            <person name="Zavolan M."/>
            <person name="Davis M.J."/>
            <person name="Wilming L.G."/>
            <person name="Aidinis V."/>
            <person name="Allen J.E."/>
            <person name="Ambesi-Impiombato A."/>
            <person name="Apweiler R."/>
            <person name="Aturaliya R.N."/>
            <person name="Bailey T.L."/>
            <person name="Bansal M."/>
            <person name="Baxter L."/>
            <person name="Beisel K.W."/>
            <person name="Bersano T."/>
            <person name="Bono H."/>
            <person name="Chalk A.M."/>
            <person name="Chiu K.P."/>
            <person name="Choudhary V."/>
            <person name="Christoffels A."/>
            <person name="Clutterbuck D.R."/>
            <person name="Crowe M.L."/>
            <person name="Dalla E."/>
            <person name="Dalrymple B.P."/>
            <person name="de Bono B."/>
            <person name="Della Gatta G."/>
            <person name="di Bernardo D."/>
            <person name="Down T."/>
            <person name="Engstrom P."/>
            <person name="Fagiolini M."/>
            <person name="Faulkner G."/>
            <person name="Fletcher C.F."/>
            <person name="Fukushima T."/>
            <person name="Furuno M."/>
            <person name="Futaki S."/>
            <person name="Gariboldi M."/>
            <person name="Georgii-Hemming P."/>
            <person name="Gingeras T.R."/>
            <person name="Gojobori T."/>
            <person name="Green R.E."/>
            <person name="Gustincich S."/>
            <person name="Harbers M."/>
            <person name="Hayashi Y."/>
            <person name="Hensch T.K."/>
            <person name="Hirokawa N."/>
            <person name="Hill D."/>
            <person name="Huminiecki L."/>
            <person name="Iacono M."/>
            <person name="Ikeo K."/>
            <person name="Iwama A."/>
            <person name="Ishikawa T."/>
            <person name="Jakt M."/>
            <person name="Kanapin A."/>
            <person name="Katoh M."/>
            <person name="Kawasawa Y."/>
            <person name="Kelso J."/>
            <person name="Kitamura H."/>
            <person name="Kitano H."/>
            <person name="Kollias G."/>
            <person name="Krishnan S.P."/>
            <person name="Kruger A."/>
            <person name="Kummerfeld S.K."/>
            <person name="Kurochkin I.V."/>
            <person name="Lareau L.F."/>
            <person name="Lazarevic D."/>
            <person name="Lipovich L."/>
            <person name="Liu J."/>
            <person name="Liuni S."/>
            <person name="McWilliam S."/>
            <person name="Madan Babu M."/>
            <person name="Madera M."/>
            <person name="Marchionni L."/>
            <person name="Matsuda H."/>
            <person name="Matsuzawa S."/>
            <person name="Miki H."/>
            <person name="Mignone F."/>
            <person name="Miyake S."/>
            <person name="Morris K."/>
            <person name="Mottagui-Tabar S."/>
            <person name="Mulder N."/>
            <person name="Nakano N."/>
            <person name="Nakauchi H."/>
            <person name="Ng P."/>
            <person name="Nilsson R."/>
            <person name="Nishiguchi S."/>
            <person name="Nishikawa S."/>
            <person name="Nori F."/>
            <person name="Ohara O."/>
            <person name="Okazaki Y."/>
            <person name="Orlando V."/>
            <person name="Pang K.C."/>
            <person name="Pavan W.J."/>
            <person name="Pavesi G."/>
            <person name="Pesole G."/>
            <person name="Petrovsky N."/>
            <person name="Piazza S."/>
            <person name="Reed J."/>
            <person name="Reid J.F."/>
            <person name="Ring B.Z."/>
            <person name="Ringwald M."/>
            <person name="Rost B."/>
            <person name="Ruan Y."/>
            <person name="Salzberg S.L."/>
            <person name="Sandelin A."/>
            <person name="Schneider C."/>
            <person name="Schoenbach C."/>
            <person name="Sekiguchi K."/>
            <person name="Semple C.A."/>
            <person name="Seno S."/>
            <person name="Sessa L."/>
            <person name="Sheng Y."/>
            <person name="Shibata Y."/>
            <person name="Shimada H."/>
            <person name="Shimada K."/>
            <person name="Silva D."/>
            <person name="Sinclair B."/>
            <person name="Sperling S."/>
            <person name="Stupka E."/>
            <person name="Sugiura K."/>
            <person name="Sultana R."/>
            <person name="Takenaka Y."/>
            <person name="Taki K."/>
            <person name="Tammoja K."/>
            <person name="Tan S.L."/>
            <person name="Tang S."/>
            <person name="Taylor M.S."/>
            <person name="Tegner J."/>
            <person name="Teichmann S.A."/>
            <person name="Ueda H.R."/>
            <person name="van Nimwegen E."/>
            <person name="Verardo R."/>
            <person name="Wei C.L."/>
            <person name="Yagi K."/>
            <person name="Yamanishi H."/>
            <person name="Zabarovsky E."/>
            <person name="Zhu S."/>
            <person name="Zimmer A."/>
            <person name="Hide W."/>
            <person name="Bult C."/>
            <person name="Grimmond S.M."/>
            <person name="Teasdale R.D."/>
            <person name="Liu E.T."/>
            <person name="Brusic V."/>
            <person name="Quackenbush J."/>
            <person name="Wahlestedt C."/>
            <person name="Mattick J.S."/>
            <person name="Hume D.A."/>
            <person name="Kai C."/>
            <person name="Sasaki D."/>
            <person name="Tomaru Y."/>
            <person name="Fukuda S."/>
            <person name="Kanamori-Katayama M."/>
            <person name="Suzuki M."/>
            <person name="Aoki J."/>
            <person name="Arakawa T."/>
            <person name="Iida J."/>
            <person name="Imamura K."/>
            <person name="Itoh M."/>
            <person name="Kato T."/>
            <person name="Kawaji H."/>
            <person name="Kawagashira N."/>
            <person name="Kawashima T."/>
            <person name="Kojima M."/>
            <person name="Kondo S."/>
            <person name="Konno H."/>
            <person name="Nakano K."/>
            <person name="Ninomiya N."/>
            <person name="Nishio T."/>
            <person name="Okada M."/>
            <person name="Plessy C."/>
            <person name="Shibata K."/>
            <person name="Shiraki T."/>
            <person name="Suzuki S."/>
            <person name="Tagami M."/>
            <person name="Waki K."/>
            <person name="Watahiki A."/>
            <person name="Okamura-Oho Y."/>
            <person name="Suzuki H."/>
            <person name="Kawai J."/>
            <person name="Hayashizaki Y."/>
        </authorList>
    </citation>
    <scope>NUCLEOTIDE SEQUENCE [LARGE SCALE MRNA] (ISOFORM 1)</scope>
    <source>
        <strain>C57BL/6J</strain>
        <strain>NOD</strain>
        <tissue>Cerebellum</tissue>
        <tissue>Egg</tissue>
        <tissue>Kidney</tissue>
        <tissue>Spinal ganglion</tissue>
    </source>
</reference>
<reference key="2">
    <citation type="journal article" date="2009" name="PLoS Biol.">
        <title>Lineage-specific biology revealed by a finished genome assembly of the mouse.</title>
        <authorList>
            <person name="Church D.M."/>
            <person name="Goodstadt L."/>
            <person name="Hillier L.W."/>
            <person name="Zody M.C."/>
            <person name="Goldstein S."/>
            <person name="She X."/>
            <person name="Bult C.J."/>
            <person name="Agarwala R."/>
            <person name="Cherry J.L."/>
            <person name="DiCuccio M."/>
            <person name="Hlavina W."/>
            <person name="Kapustin Y."/>
            <person name="Meric P."/>
            <person name="Maglott D."/>
            <person name="Birtle Z."/>
            <person name="Marques A.C."/>
            <person name="Graves T."/>
            <person name="Zhou S."/>
            <person name="Teague B."/>
            <person name="Potamousis K."/>
            <person name="Churas C."/>
            <person name="Place M."/>
            <person name="Herschleb J."/>
            <person name="Runnheim R."/>
            <person name="Forrest D."/>
            <person name="Amos-Landgraf J."/>
            <person name="Schwartz D.C."/>
            <person name="Cheng Z."/>
            <person name="Lindblad-Toh K."/>
            <person name="Eichler E.E."/>
            <person name="Ponting C.P."/>
        </authorList>
    </citation>
    <scope>NUCLEOTIDE SEQUENCE [LARGE SCALE GENOMIC DNA]</scope>
    <source>
        <strain>C57BL/6J</strain>
    </source>
</reference>
<reference key="3">
    <citation type="journal article" date="2004" name="Genome Res.">
        <title>The status, quality, and expansion of the NIH full-length cDNA project: the Mammalian Gene Collection (MGC).</title>
        <authorList>
            <consortium name="The MGC Project Team"/>
        </authorList>
    </citation>
    <scope>NUCLEOTIDE SEQUENCE [LARGE SCALE MRNA] (ISOFORMS 1 AND 2)</scope>
    <source>
        <strain>C57BL/6J</strain>
        <strain>FVB/N</strain>
        <tissue>Brain</tissue>
        <tissue>Colon</tissue>
        <tissue>Olfactory epithelium</tissue>
    </source>
</reference>
<reference key="4">
    <citation type="journal article" date="2009" name="Cell. Mol. Neurobiol.">
        <title>Interaction between syntaxin 8 and HECTd3, a HECT domain ligase.</title>
        <authorList>
            <person name="Zhang L."/>
            <person name="Kang L."/>
            <person name="Bond W."/>
            <person name="Zhang N."/>
        </authorList>
    </citation>
    <scope>FUNCTION</scope>
    <scope>SUBCELLULAR LOCATION</scope>
    <scope>INTERACTION WITH STX8</scope>
</reference>
<reference key="5">
    <citation type="journal article" date="2010" name="Cell">
        <title>A tissue-specific atlas of mouse protein phosphorylation and expression.</title>
        <authorList>
            <person name="Huttlin E.L."/>
            <person name="Jedrychowski M.P."/>
            <person name="Elias J.E."/>
            <person name="Goswami T."/>
            <person name="Rad R."/>
            <person name="Beausoleil S.A."/>
            <person name="Villen J."/>
            <person name="Haas W."/>
            <person name="Sowa M.E."/>
            <person name="Gygi S.P."/>
        </authorList>
    </citation>
    <scope>IDENTIFICATION BY MASS SPECTROMETRY [LARGE SCALE ANALYSIS]</scope>
    <source>
        <tissue>Brain</tissue>
        <tissue>Brown adipose tissue</tissue>
        <tissue>Kidney</tissue>
        <tissue>Liver</tissue>
        <tissue>Lung</tissue>
        <tissue>Pancreas</tissue>
        <tissue>Spleen</tissue>
        <tissue>Testis</tissue>
    </source>
</reference>
<comment type="function">
    <text evidence="1 4">E3 ubiquitin ligases accepts ubiquitin from an E2 ubiquitin-conjugating enzyme in the form of a thioester and then directly transfers the ubiquitin to targeted substrates. Mediates ubiquitination of TRIOBP and its subsequent proteasomal degradation, thus facilitating cell cycle progression by regulating the turn-over of TRIOBP (By similarity). Also mediates ubiquitination of STX8.</text>
</comment>
<comment type="catalytic activity">
    <reaction>
        <text>S-ubiquitinyl-[E2 ubiquitin-conjugating enzyme]-L-cysteine + [acceptor protein]-L-lysine = [E2 ubiquitin-conjugating enzyme]-L-cysteine + N(6)-ubiquitinyl-[acceptor protein]-L-lysine.</text>
        <dbReference type="EC" id="2.3.2.26"/>
    </reaction>
</comment>
<comment type="pathway">
    <text>Protein modification; protein ubiquitination.</text>
</comment>
<comment type="subunit">
    <text evidence="1 4">Interacts with TRIOBP (By similarity). Interacts with STX8.</text>
</comment>
<comment type="subcellular location">
    <subcellularLocation>
        <location evidence="4">Cytoplasm</location>
        <location evidence="4">Perinuclear region</location>
    </subcellularLocation>
</comment>
<comment type="alternative products">
    <event type="alternative splicing"/>
    <isoform>
        <id>Q3U487-1</id>
        <name>1</name>
        <sequence type="displayed"/>
    </isoform>
    <isoform>
        <id>Q3U487-2</id>
        <name>2</name>
        <sequence type="described" ref="VSP_019441"/>
    </isoform>
</comment>
<proteinExistence type="evidence at protein level"/>
<sequence>MAGPGPGAALESPRQLLGRVRFLAEAARSLRAGLPLPAALAFVPREVLYKLYKDPAGPSRVLLPVWEAEGLGLRVGAVGAAPGTGSGPLRAARDSIELRRGACVRTTGEELCNGHGLWVKLTKEQLAEHLSDCSLDEGWLLVCRPAEGGARLVPIDTPDHLQRQQQLFGVDYRPVLRWEQVVDLTYSHRLGSRPQPAEAYTEAIQRLLYVPPTWTYECDEDLIHFLYDHLGKEDENLGSVKQYVESIDVSSYTEEFNVSCLTDSNADTYWESDGSQCQHWVRLTMKKGTIVKKLLLTVDTTDDNFMPKRVVVYGGEGDNLKKLSDVNIDETLIGDVCVLEDMTVHLPIIEIRIVECRDDGIDVRLRGVKIKSSRQRELGLNADLFQPASLVRYPRLEGTDPEVLYRRAVLLQRFIKILDSVLHHLVPAWDHTLGTFSEIKQVKQFLLLSRQRPSLVAQCLRDSESSKPSFMPRLYINRRLAMEHRACPSRDPACKNAVFTQVYEGLKPSDKYEKPLDYRWPMRYDQWWECKFIAEGIIDQGGGFRDSLADMSEELCPSSADTPVPLPFFVRTANQGNGTGEARDMYVPNPSCRDFAKYEWIGQLMGAALRGKEFLVLALPGFVWKQLSGEEVSWSKDFPAVDSVLVKLLEVMEGVDKETFEFKFGKELTFTTVLSDQQVVELIPGGTGIVVEYEDRSRFIQLVRKARLEESKEQVAAMQAGLLKVVPQAVLDLLTWQELEKKVCGDPEVTVDALRKLTRFEDFEPSDTRVQYFWEALNNFTNEDRSRFLRFVTGRSRLPARIYIYPDKLGYETTDALPESSTCSSTLFLPHYASAKVCEEKLRYAAYNCVAIDTDMSPWEE</sequence>
<gene>
    <name type="primary">Hectd3</name>
</gene>
<accession>Q3U487</accession>
<accession>B1AUL1</accession>
<accession>Q3TN76</accession>
<accession>Q641P3</accession>
<accession>Q8BQ74</accession>
<accession>Q8R1L6</accession>
<protein>
    <recommendedName>
        <fullName>E3 ubiquitin-protein ligase HECTD3</fullName>
        <ecNumber>2.3.2.26</ecNumber>
    </recommendedName>
    <alternativeName>
        <fullName>HECT domain-containing protein 3</fullName>
    </alternativeName>
    <alternativeName>
        <fullName>HECT-type E3 ubiquitin transferase HECTD3</fullName>
    </alternativeName>
</protein>
<evidence type="ECO:0000250" key="1">
    <source>
        <dbReference type="UniProtKB" id="Q5T447"/>
    </source>
</evidence>
<evidence type="ECO:0000255" key="2">
    <source>
        <dbReference type="PROSITE-ProRule" id="PRU00104"/>
    </source>
</evidence>
<evidence type="ECO:0000255" key="3">
    <source>
        <dbReference type="PROSITE-ProRule" id="PRU00614"/>
    </source>
</evidence>
<evidence type="ECO:0000269" key="4">
    <source>
    </source>
</evidence>
<evidence type="ECO:0000303" key="5">
    <source>
    </source>
</evidence>
<evidence type="ECO:0000305" key="6"/>